<name>ILCR1_CAEEL</name>
<organism evidence="8">
    <name type="scientific">Caenorhabditis elegans</name>
    <dbReference type="NCBI Taxonomy" id="6239"/>
    <lineage>
        <taxon>Eukaryota</taxon>
        <taxon>Metazoa</taxon>
        <taxon>Ecdysozoa</taxon>
        <taxon>Nematoda</taxon>
        <taxon>Chromadorea</taxon>
        <taxon>Rhabditida</taxon>
        <taxon>Rhabditina</taxon>
        <taxon>Rhabditomorpha</taxon>
        <taxon>Rhabditoidea</taxon>
        <taxon>Rhabditidae</taxon>
        <taxon>Peloderinae</taxon>
        <taxon>Caenorhabditis</taxon>
    </lineage>
</organism>
<sequence length="846" mass="94852">MFLHSPALLIWLFLFCLAGPQAVRTEPYNSTSSSSSPTANDVTSSDLLLLASEETPTRAPKPVTKQGKKNVVKVKKGGNGTVDDSPWVTDCSEPLNKDISCSVNIIGCSDNVFKYVDAGQEPPRAHDVRIAPTTKVMGANRIDKRKHRLHVDVSWQIPQLEASTHLKAFKLIVNGPDGKNTCFVFNVTQTHVDDEGISPRYRFSSNTLFDFGHNYTVTIVSLPMSRKRAPKVSATSLMPDDPDAAPVKIVKTNEQMCEGKSNPQASKWAASFRKIFLFSAIRLIQIEFLAAPPQYCFEEYEVRLLDSSGIVMLQSAIITKDELRTEIINGRPVQFGEFNFTDIELDTDLIPSVIPIESAHDGRCLCVTENGCSCLAADWKPVKLTRIEKPPATSNQTEESDGKAEKDKKEDTTWTWHTYAITGGAIIAILFILSVCAGLKCYKKFNNKKKASNIHLLNENPAFSHSGSIPLILKQSISVLIVYSHDSAQHEAAVLAFAELLRDVFNLNVHLDVWDEDDIEENRAEYINSSIVRANKVIIINSIGAYFRTVFRHQREPAIERITTGRNDVIFDMQCELALQHPCVISCHFSYTNPKYVFFPINRLLQYSIPNSLMTMTTALTEQPARPEQLAGFNQVFARLQAAISRKLNYIESDPQWFENTHHRVATRRVSELEAHNIVPLPPSLEVKVEDEDAFGQMETLPIDELKEKFAAKRDLEVEVLDSEDVKLLEDVKCAPGPIHVEPTEPEVLEPAEEPMEEAEEDEEDEDDVDSVEGQTARIEELQRLIVHKDMNHDSGNLDSAYVSGSDFSADIHNEILDKPRLNAEMDLRKANREDSAFHDEVIGIH</sequence>
<reference evidence="8" key="1">
    <citation type="journal article" date="1998" name="Science">
        <title>Genome sequence of the nematode C. elegans: a platform for investigating biology.</title>
        <authorList>
            <consortium name="The C. elegans sequencing consortium"/>
        </authorList>
    </citation>
    <scope>NUCLEOTIDE SEQUENCE [LARGE SCALE GENOMIC DNA]</scope>
    <source>
        <strain evidence="8">Bristol N2</strain>
    </source>
</reference>
<reference evidence="7" key="2">
    <citation type="journal article" date="2017" name="Nature">
        <title>IL-17 is a neuromodulator of Caenorhabditis elegans sensory responses.</title>
        <authorList>
            <person name="Chen C."/>
            <person name="Itakura E."/>
            <person name="Nelson G.M."/>
            <person name="Sheng M."/>
            <person name="Laurent P."/>
            <person name="Fenk L.A."/>
            <person name="Butcher R.A."/>
            <person name="Hegde R.S."/>
            <person name="de Bono M."/>
        </authorList>
    </citation>
    <scope>FUNCTION</scope>
    <scope>IDENTIFICATION IN RECEPTOR COMPLEX WITH ILCR-2</scope>
    <scope>INTERACTION WITH ILCR-2</scope>
    <scope>SUBCELLULAR LOCATION</scope>
    <scope>TISSUE SPECIFICITY</scope>
    <scope>MUTAGENESIS OF 159-GLN--HIS-846; 264-GLN--HIS-846; PRO-292; SER-487 AND 548-ARG--HIS-846</scope>
</reference>
<accession>Q9NA64</accession>
<protein>
    <recommendedName>
        <fullName evidence="9">Interleukin cytokine receptor-related protein 1</fullName>
    </recommendedName>
    <alternativeName>
        <fullName evidence="7">Interleukin-17 receptor-like protein 1</fullName>
    </alternativeName>
</protein>
<dbReference type="EMBL" id="BX284604">
    <property type="protein sequence ID" value="CAB54470.1"/>
    <property type="molecule type" value="Genomic_DNA"/>
</dbReference>
<dbReference type="PIR" id="T27282">
    <property type="entry name" value="T27282"/>
</dbReference>
<dbReference type="RefSeq" id="NP_502736.1">
    <property type="nucleotide sequence ID" value="NM_070335.6"/>
</dbReference>
<dbReference type="SMR" id="Q9NA64"/>
<dbReference type="ComplexPortal" id="CPX-3401">
    <property type="entry name" value="Interleukin-17-like receptor complex"/>
</dbReference>
<dbReference type="FunCoup" id="Q9NA64">
    <property type="interactions" value="61"/>
</dbReference>
<dbReference type="IntAct" id="Q9NA64">
    <property type="interactions" value="2"/>
</dbReference>
<dbReference type="STRING" id="6239.Y64G10A.6.1"/>
<dbReference type="GlyCosmos" id="Q9NA64">
    <property type="glycosylation" value="6 sites, No reported glycans"/>
</dbReference>
<dbReference type="PaxDb" id="6239-Y64G10A.6"/>
<dbReference type="EnsemblMetazoa" id="Y64G10A.6.1">
    <property type="protein sequence ID" value="Y64G10A.6.1"/>
    <property type="gene ID" value="WBGene00013415"/>
</dbReference>
<dbReference type="GeneID" id="178376"/>
<dbReference type="KEGG" id="cel:CELE_Y64G10A.6"/>
<dbReference type="UCSC" id="Y64G10A.6">
    <property type="organism name" value="c. elegans"/>
</dbReference>
<dbReference type="AGR" id="WB:WBGene00013415"/>
<dbReference type="CTD" id="178376"/>
<dbReference type="WormBase" id="Y64G10A.6">
    <property type="protein sequence ID" value="CE22716"/>
    <property type="gene ID" value="WBGene00013415"/>
    <property type="gene designation" value="ilcr-1"/>
</dbReference>
<dbReference type="eggNOG" id="ENOG502RCG0">
    <property type="taxonomic scope" value="Eukaryota"/>
</dbReference>
<dbReference type="GeneTree" id="ENSGT00940000165644"/>
<dbReference type="HOGENOM" id="CLU_015782_0_0_1"/>
<dbReference type="InParanoid" id="Q9NA64"/>
<dbReference type="OMA" id="CFEEYEV"/>
<dbReference type="OrthoDB" id="5915222at2759"/>
<dbReference type="PRO" id="PR:Q9NA64"/>
<dbReference type="Proteomes" id="UP000001940">
    <property type="component" value="Chromosome IV"/>
</dbReference>
<dbReference type="Bgee" id="WBGene00013415">
    <property type="expression patterns" value="Expressed in pharyngeal muscle cell (C elegans) and 3 other cell types or tissues"/>
</dbReference>
<dbReference type="GO" id="GO:0005886">
    <property type="term" value="C:plasma membrane"/>
    <property type="evidence" value="ECO:0000314"/>
    <property type="project" value="UniProtKB"/>
</dbReference>
<dbReference type="GO" id="GO:0098797">
    <property type="term" value="C:plasma membrane protein complex"/>
    <property type="evidence" value="ECO:0000314"/>
    <property type="project" value="ComplexPortal"/>
</dbReference>
<dbReference type="GO" id="GO:0043235">
    <property type="term" value="C:receptor complex"/>
    <property type="evidence" value="ECO:0000315"/>
    <property type="project" value="UniProtKB"/>
</dbReference>
<dbReference type="GO" id="GO:0030368">
    <property type="term" value="F:interleukin-17 receptor activity"/>
    <property type="evidence" value="ECO:0000318"/>
    <property type="project" value="GO_Central"/>
</dbReference>
<dbReference type="GO" id="GO:0097400">
    <property type="term" value="P:interleukin-17-mediated signaling pathway"/>
    <property type="evidence" value="ECO:0000303"/>
    <property type="project" value="ComplexPortal"/>
</dbReference>
<dbReference type="GO" id="GO:0040017">
    <property type="term" value="P:positive regulation of locomotion"/>
    <property type="evidence" value="ECO:0000315"/>
    <property type="project" value="UniProtKB"/>
</dbReference>
<dbReference type="GO" id="GO:0070482">
    <property type="term" value="P:response to oxygen levels"/>
    <property type="evidence" value="ECO:0000315"/>
    <property type="project" value="UniProtKB"/>
</dbReference>
<dbReference type="GO" id="GO:0050893">
    <property type="term" value="P:sensory processing"/>
    <property type="evidence" value="ECO:0000303"/>
    <property type="project" value="ComplexPortal"/>
</dbReference>
<dbReference type="Gene3D" id="3.40.50.11530">
    <property type="match status" value="1"/>
</dbReference>
<dbReference type="Gene3D" id="2.60.40.2160">
    <property type="entry name" value="Interleukin-17 receptor A/B, fibronectin-III-like domain 1"/>
    <property type="match status" value="1"/>
</dbReference>
<dbReference type="InterPro" id="IPR039465">
    <property type="entry name" value="IL-17_rcpt-like"/>
</dbReference>
<dbReference type="InterPro" id="IPR038683">
    <property type="entry name" value="IL17RA/B_FnIII-like_1_sf"/>
</dbReference>
<dbReference type="InterPro" id="IPR013568">
    <property type="entry name" value="SEFIR_dom"/>
</dbReference>
<dbReference type="PANTHER" id="PTHR15583:SF20">
    <property type="entry name" value="INTERLEUKIN CYTOKINE RECEPTOR-RELATED PROTEIN 1"/>
    <property type="match status" value="1"/>
</dbReference>
<dbReference type="PANTHER" id="PTHR15583">
    <property type="entry name" value="INTERLEUKIN-17 RECEPTOR"/>
    <property type="match status" value="1"/>
</dbReference>
<dbReference type="Pfam" id="PF23608">
    <property type="entry name" value="Ig_ILCR1"/>
    <property type="match status" value="1"/>
</dbReference>
<dbReference type="Pfam" id="PF08357">
    <property type="entry name" value="SEFIR"/>
    <property type="match status" value="1"/>
</dbReference>
<dbReference type="PROSITE" id="PS51534">
    <property type="entry name" value="SEFIR"/>
    <property type="match status" value="1"/>
</dbReference>
<evidence type="ECO:0000255" key="1"/>
<evidence type="ECO:0000255" key="2">
    <source>
        <dbReference type="PROSITE-ProRule" id="PRU00498"/>
    </source>
</evidence>
<evidence type="ECO:0000255" key="3">
    <source>
        <dbReference type="PROSITE-ProRule" id="PRU00867"/>
    </source>
</evidence>
<evidence type="ECO:0000256" key="4">
    <source>
        <dbReference type="SAM" id="MobiDB-lite"/>
    </source>
</evidence>
<evidence type="ECO:0000269" key="5">
    <source>
    </source>
</evidence>
<evidence type="ECO:0000303" key="6">
    <source>
    </source>
</evidence>
<evidence type="ECO:0000305" key="7"/>
<evidence type="ECO:0000312" key="8">
    <source>
        <dbReference type="Proteomes" id="UP000001940"/>
    </source>
</evidence>
<evidence type="ECO:0000312" key="9">
    <source>
        <dbReference type="WormBase" id="Y64G10A.6"/>
    </source>
</evidence>
<feature type="signal peptide" evidence="1">
    <location>
        <begin position="1"/>
        <end position="25"/>
    </location>
</feature>
<feature type="chain" id="PRO_5004330844" description="Interleukin cytokine receptor-related protein 1" evidence="7">
    <location>
        <begin position="26"/>
        <end position="846"/>
    </location>
</feature>
<feature type="topological domain" description="Extracellular" evidence="7">
    <location>
        <begin position="26"/>
        <end position="418"/>
    </location>
</feature>
<feature type="transmembrane region" description="Helical" evidence="1">
    <location>
        <begin position="419"/>
        <end position="439"/>
    </location>
</feature>
<feature type="topological domain" description="Cytoplasmic" evidence="7">
    <location>
        <begin position="440"/>
        <end position="846"/>
    </location>
</feature>
<feature type="domain" description="SEFIR" evidence="3">
    <location>
        <begin position="476"/>
        <end position="618"/>
    </location>
</feature>
<feature type="region of interest" description="Disordered" evidence="4">
    <location>
        <begin position="388"/>
        <end position="409"/>
    </location>
</feature>
<feature type="region of interest" description="Disordered" evidence="4">
    <location>
        <begin position="737"/>
        <end position="771"/>
    </location>
</feature>
<feature type="compositionally biased region" description="Basic and acidic residues" evidence="4">
    <location>
        <begin position="400"/>
        <end position="409"/>
    </location>
</feature>
<feature type="compositionally biased region" description="Acidic residues" evidence="4">
    <location>
        <begin position="744"/>
        <end position="771"/>
    </location>
</feature>
<feature type="glycosylation site" description="N-linked (GlcNAc...) asparagine" evidence="2">
    <location>
        <position position="29"/>
    </location>
</feature>
<feature type="glycosylation site" description="N-linked (GlcNAc...) asparagine" evidence="2">
    <location>
        <position position="79"/>
    </location>
</feature>
<feature type="glycosylation site" description="N-linked (GlcNAc...) asparagine" evidence="2">
    <location>
        <position position="186"/>
    </location>
</feature>
<feature type="glycosylation site" description="N-linked (GlcNAc...) asparagine" evidence="2">
    <location>
        <position position="214"/>
    </location>
</feature>
<feature type="glycosylation site" description="N-linked (GlcNAc...) asparagine" evidence="2">
    <location>
        <position position="339"/>
    </location>
</feature>
<feature type="glycosylation site" description="N-linked (GlcNAc...) asparagine" evidence="2">
    <location>
        <position position="395"/>
    </location>
</feature>
<feature type="mutagenesis site" description="In db719; defective aggregation behavior." evidence="5">
    <location>
        <begin position="159"/>
        <end position="846"/>
    </location>
</feature>
<feature type="mutagenesis site" description="Defective aggregation behavior." evidence="5">
    <location>
        <begin position="264"/>
        <end position="846"/>
    </location>
</feature>
<feature type="mutagenesis site" description="Defective aggregation behavior." evidence="5">
    <original>P</original>
    <variation>L</variation>
    <location>
        <position position="292"/>
    </location>
</feature>
<feature type="mutagenesis site" description="Defective aggregation behavior." evidence="5">
    <original>S</original>
    <variation>F</variation>
    <location>
        <position position="487"/>
    </location>
</feature>
<feature type="mutagenesis site" description="Defective aggregation behavior." evidence="5">
    <location>
        <begin position="548"/>
        <end position="846"/>
    </location>
</feature>
<comment type="function">
    <text evidence="5">Forms a receptor complex together with receptor ilcr-2, which upon activation acts as a modulator of neuronal activity. Binding of the ligand ilc-17.1 to the ilcr-1/2 receptor complex triggers a signaling cascade that activates the downstream signaling components actl-1, pik-1 and nfki-1, and results in increased neuronal activity in RMG interneurons in response to input from oxygen-sensing neurons. This leads to increased animal movement and promotes aggregation behavior.</text>
</comment>
<comment type="subunit">
    <text evidence="5">Component of a heterodimeric receptor complex composed of ilcr-1 and ilcr-2. The receptor complex interacts with actl-1 and ilc-17.1 with the interaction being mediated by ilcr-2.</text>
</comment>
<comment type="interaction">
    <interactant intactId="EBI-16877763">
        <id>Q9NA64</id>
    </interactant>
    <interactant intactId="EBI-324674">
        <id>Q18008</id>
        <label>actl-1</label>
    </interactant>
    <organismsDiffer>false</organismsDiffer>
    <experiments>2</experiments>
</comment>
<comment type="interaction">
    <interactant intactId="EBI-16877763">
        <id>Q9NA64</id>
    </interactant>
    <interactant intactId="EBI-327172">
        <id>Q10128</id>
        <label>ilcr-2</label>
    </interactant>
    <organismsDiffer>false</organismsDiffer>
    <experiments>3</experiments>
</comment>
<comment type="subcellular location">
    <subcellularLocation>
        <location evidence="5">Cell membrane</location>
        <topology evidence="7">Single-pass type I membrane protein</topology>
    </subcellularLocation>
</comment>
<comment type="tissue specificity">
    <text evidence="5">Expressed in most neurons.</text>
</comment>
<gene>
    <name evidence="6 9" type="primary">ilcr-1</name>
    <name evidence="9" type="ORF">Y64G10A.6</name>
</gene>
<keyword id="KW-1003">Cell membrane</keyword>
<keyword id="KW-0325">Glycoprotein</keyword>
<keyword id="KW-0472">Membrane</keyword>
<keyword id="KW-0675">Receptor</keyword>
<keyword id="KW-1185">Reference proteome</keyword>
<keyword id="KW-0732">Signal</keyword>
<keyword id="KW-0812">Transmembrane</keyword>
<keyword id="KW-1133">Transmembrane helix</keyword>
<proteinExistence type="evidence at protein level"/>